<organism>
    <name type="scientific">Bacillus subtilis (strain 168)</name>
    <dbReference type="NCBI Taxonomy" id="224308"/>
    <lineage>
        <taxon>Bacteria</taxon>
        <taxon>Bacillati</taxon>
        <taxon>Bacillota</taxon>
        <taxon>Bacilli</taxon>
        <taxon>Bacillales</taxon>
        <taxon>Bacillaceae</taxon>
        <taxon>Bacillus</taxon>
    </lineage>
</organism>
<protein>
    <recommendedName>
        <fullName>Agmatinase</fullName>
        <ecNumber>3.5.3.11</ecNumber>
    </recommendedName>
    <alternativeName>
        <fullName>Agmatine ureohydrolase</fullName>
        <shortName>AUH</shortName>
    </alternativeName>
</protein>
<accession>P70999</accession>
<feature type="chain" id="PRO_0000173728" description="Agmatinase">
    <location>
        <begin position="1"/>
        <end position="290"/>
    </location>
</feature>
<feature type="binding site" evidence="1">
    <location>
        <position position="112"/>
    </location>
    <ligand>
        <name>Mn(2+)</name>
        <dbReference type="ChEBI" id="CHEBI:29035"/>
    </ligand>
</feature>
<feature type="binding site" evidence="1">
    <location>
        <position position="135"/>
    </location>
    <ligand>
        <name>Mn(2+)</name>
        <dbReference type="ChEBI" id="CHEBI:29035"/>
    </ligand>
</feature>
<feature type="binding site" evidence="1">
    <location>
        <position position="137"/>
    </location>
    <ligand>
        <name>Mn(2+)</name>
        <dbReference type="ChEBI" id="CHEBI:29035"/>
    </ligand>
</feature>
<feature type="binding site" evidence="1">
    <location>
        <position position="139"/>
    </location>
    <ligand>
        <name>Mn(2+)</name>
        <dbReference type="ChEBI" id="CHEBI:29035"/>
    </ligand>
</feature>
<feature type="binding site" evidence="1">
    <location>
        <position position="216"/>
    </location>
    <ligand>
        <name>Mn(2+)</name>
        <dbReference type="ChEBI" id="CHEBI:29035"/>
    </ligand>
</feature>
<feature type="binding site" evidence="1">
    <location>
        <position position="218"/>
    </location>
    <ligand>
        <name>Mn(2+)</name>
        <dbReference type="ChEBI" id="CHEBI:29035"/>
    </ligand>
</feature>
<evidence type="ECO:0000255" key="1">
    <source>
        <dbReference type="PROSITE-ProRule" id="PRU00742"/>
    </source>
</evidence>
<name>SPEB_BACSU</name>
<comment type="function">
    <text>Catalyzes the formation of putrescine from agmatine.</text>
</comment>
<comment type="catalytic activity">
    <reaction>
        <text>agmatine + H2O = urea + putrescine</text>
        <dbReference type="Rhea" id="RHEA:13929"/>
        <dbReference type="ChEBI" id="CHEBI:15377"/>
        <dbReference type="ChEBI" id="CHEBI:16199"/>
        <dbReference type="ChEBI" id="CHEBI:58145"/>
        <dbReference type="ChEBI" id="CHEBI:326268"/>
        <dbReference type="EC" id="3.5.3.11"/>
    </reaction>
</comment>
<comment type="cofactor">
    <cofactor evidence="1">
        <name>Mn(2+)</name>
        <dbReference type="ChEBI" id="CHEBI:29035"/>
    </cofactor>
</comment>
<comment type="pathway">
    <text>Amine and polyamine biosynthesis; putrescine biosynthesis via agmatine pathway; putrescine from agmatine: step 1/1.</text>
</comment>
<comment type="similarity">
    <text evidence="1">Belongs to the arginase family. Agmatinase subfamily.</text>
</comment>
<proteinExistence type="evidence at protein level"/>
<gene>
    <name type="primary">speB</name>
    <name type="synonym">ywhG</name>
    <name type="ordered locus">BSU37490</name>
</gene>
<dbReference type="EC" id="3.5.3.11"/>
<dbReference type="EMBL" id="Z80360">
    <property type="protein sequence ID" value="CAB02517.1"/>
    <property type="molecule type" value="Genomic_DNA"/>
</dbReference>
<dbReference type="EMBL" id="AL009126">
    <property type="protein sequence ID" value="CAB15776.1"/>
    <property type="molecule type" value="Genomic_DNA"/>
</dbReference>
<dbReference type="PIR" id="H70057">
    <property type="entry name" value="H70057"/>
</dbReference>
<dbReference type="RefSeq" id="NP_391629.1">
    <property type="nucleotide sequence ID" value="NC_000964.3"/>
</dbReference>
<dbReference type="RefSeq" id="WP_003227545.1">
    <property type="nucleotide sequence ID" value="NZ_OZ025638.1"/>
</dbReference>
<dbReference type="SMR" id="P70999"/>
<dbReference type="FunCoup" id="P70999">
    <property type="interactions" value="474"/>
</dbReference>
<dbReference type="STRING" id="224308.BSU37490"/>
<dbReference type="PaxDb" id="224308-BSU37490"/>
<dbReference type="EnsemblBacteria" id="CAB15776">
    <property type="protein sequence ID" value="CAB15776"/>
    <property type="gene ID" value="BSU_37490"/>
</dbReference>
<dbReference type="GeneID" id="937205"/>
<dbReference type="KEGG" id="bsu:BSU37490"/>
<dbReference type="PATRIC" id="fig|224308.179.peg.4060"/>
<dbReference type="eggNOG" id="COG0010">
    <property type="taxonomic scope" value="Bacteria"/>
</dbReference>
<dbReference type="InParanoid" id="P70999"/>
<dbReference type="OrthoDB" id="9788689at2"/>
<dbReference type="PhylomeDB" id="P70999"/>
<dbReference type="BioCyc" id="BSUB:BSU37490-MONOMER"/>
<dbReference type="BioCyc" id="MetaCyc:SPEBBACSU-MONOMER"/>
<dbReference type="UniPathway" id="UPA00534">
    <property type="reaction ID" value="UER00287"/>
</dbReference>
<dbReference type="Proteomes" id="UP000001570">
    <property type="component" value="Chromosome"/>
</dbReference>
<dbReference type="GO" id="GO:0008783">
    <property type="term" value="F:agmatinase activity"/>
    <property type="evidence" value="ECO:0000318"/>
    <property type="project" value="GO_Central"/>
</dbReference>
<dbReference type="GO" id="GO:0046872">
    <property type="term" value="F:metal ion binding"/>
    <property type="evidence" value="ECO:0007669"/>
    <property type="project" value="UniProtKB-KW"/>
</dbReference>
<dbReference type="GO" id="GO:0033389">
    <property type="term" value="P:putrescine biosynthetic process from arginine, via agmatine"/>
    <property type="evidence" value="ECO:0000318"/>
    <property type="project" value="GO_Central"/>
</dbReference>
<dbReference type="GO" id="GO:0008295">
    <property type="term" value="P:spermidine biosynthetic process"/>
    <property type="evidence" value="ECO:0007669"/>
    <property type="project" value="UniProtKB-KW"/>
</dbReference>
<dbReference type="CDD" id="cd11593">
    <property type="entry name" value="Agmatinase-like_2"/>
    <property type="match status" value="1"/>
</dbReference>
<dbReference type="FunFam" id="3.40.800.10:FF:000004">
    <property type="entry name" value="Agmatinase"/>
    <property type="match status" value="1"/>
</dbReference>
<dbReference type="Gene3D" id="3.40.800.10">
    <property type="entry name" value="Ureohydrolase domain"/>
    <property type="match status" value="1"/>
</dbReference>
<dbReference type="InterPro" id="IPR005925">
    <property type="entry name" value="Agmatinase-rel"/>
</dbReference>
<dbReference type="InterPro" id="IPR006035">
    <property type="entry name" value="Ureohydrolase"/>
</dbReference>
<dbReference type="InterPro" id="IPR023696">
    <property type="entry name" value="Ureohydrolase_dom_sf"/>
</dbReference>
<dbReference type="InterPro" id="IPR020855">
    <property type="entry name" value="Ureohydrolase_Mn_BS"/>
</dbReference>
<dbReference type="NCBIfam" id="TIGR01230">
    <property type="entry name" value="agmatinase"/>
    <property type="match status" value="1"/>
</dbReference>
<dbReference type="PANTHER" id="PTHR11358">
    <property type="entry name" value="ARGINASE/AGMATINASE"/>
    <property type="match status" value="1"/>
</dbReference>
<dbReference type="PANTHER" id="PTHR11358:SF26">
    <property type="entry name" value="GUANIDINO ACID HYDROLASE, MITOCHONDRIAL"/>
    <property type="match status" value="1"/>
</dbReference>
<dbReference type="Pfam" id="PF00491">
    <property type="entry name" value="Arginase"/>
    <property type="match status" value="1"/>
</dbReference>
<dbReference type="PIRSF" id="PIRSF036979">
    <property type="entry name" value="Arginase"/>
    <property type="match status" value="1"/>
</dbReference>
<dbReference type="SUPFAM" id="SSF52768">
    <property type="entry name" value="Arginase/deacetylase"/>
    <property type="match status" value="1"/>
</dbReference>
<dbReference type="PROSITE" id="PS01053">
    <property type="entry name" value="ARGINASE_1"/>
    <property type="match status" value="1"/>
</dbReference>
<dbReference type="PROSITE" id="PS51409">
    <property type="entry name" value="ARGINASE_2"/>
    <property type="match status" value="1"/>
</dbReference>
<reference key="1">
    <citation type="journal article" date="1997" name="Microbiology">
        <title>The Bacillus subtilis genome from gerBC (311 degrees) to licR (334 degrees).</title>
        <authorList>
            <person name="Presecan E."/>
            <person name="Moszer I."/>
            <person name="Boursier L."/>
            <person name="Cruz Ramos H."/>
            <person name="De La Fuente V."/>
            <person name="Hullo M.-F."/>
            <person name="Lelong C."/>
            <person name="Schleich S."/>
            <person name="Sekowska A."/>
            <person name="Song B.H."/>
            <person name="Villani G."/>
            <person name="Kunst F."/>
            <person name="Danchin A."/>
            <person name="Glaser P."/>
        </authorList>
    </citation>
    <scope>NUCLEOTIDE SEQUENCE [GENOMIC DNA]</scope>
    <source>
        <strain>168</strain>
    </source>
</reference>
<reference key="2">
    <citation type="journal article" date="1997" name="Nature">
        <title>The complete genome sequence of the Gram-positive bacterium Bacillus subtilis.</title>
        <authorList>
            <person name="Kunst F."/>
            <person name="Ogasawara N."/>
            <person name="Moszer I."/>
            <person name="Albertini A.M."/>
            <person name="Alloni G."/>
            <person name="Azevedo V."/>
            <person name="Bertero M.G."/>
            <person name="Bessieres P."/>
            <person name="Bolotin A."/>
            <person name="Borchert S."/>
            <person name="Borriss R."/>
            <person name="Boursier L."/>
            <person name="Brans A."/>
            <person name="Braun M."/>
            <person name="Brignell S.C."/>
            <person name="Bron S."/>
            <person name="Brouillet S."/>
            <person name="Bruschi C.V."/>
            <person name="Caldwell B."/>
            <person name="Capuano V."/>
            <person name="Carter N.M."/>
            <person name="Choi S.-K."/>
            <person name="Codani J.-J."/>
            <person name="Connerton I.F."/>
            <person name="Cummings N.J."/>
            <person name="Daniel R.A."/>
            <person name="Denizot F."/>
            <person name="Devine K.M."/>
            <person name="Duesterhoeft A."/>
            <person name="Ehrlich S.D."/>
            <person name="Emmerson P.T."/>
            <person name="Entian K.-D."/>
            <person name="Errington J."/>
            <person name="Fabret C."/>
            <person name="Ferrari E."/>
            <person name="Foulger D."/>
            <person name="Fritz C."/>
            <person name="Fujita M."/>
            <person name="Fujita Y."/>
            <person name="Fuma S."/>
            <person name="Galizzi A."/>
            <person name="Galleron N."/>
            <person name="Ghim S.-Y."/>
            <person name="Glaser P."/>
            <person name="Goffeau A."/>
            <person name="Golightly E.J."/>
            <person name="Grandi G."/>
            <person name="Guiseppi G."/>
            <person name="Guy B.J."/>
            <person name="Haga K."/>
            <person name="Haiech J."/>
            <person name="Harwood C.R."/>
            <person name="Henaut A."/>
            <person name="Hilbert H."/>
            <person name="Holsappel S."/>
            <person name="Hosono S."/>
            <person name="Hullo M.-F."/>
            <person name="Itaya M."/>
            <person name="Jones L.-M."/>
            <person name="Joris B."/>
            <person name="Karamata D."/>
            <person name="Kasahara Y."/>
            <person name="Klaerr-Blanchard M."/>
            <person name="Klein C."/>
            <person name="Kobayashi Y."/>
            <person name="Koetter P."/>
            <person name="Koningstein G."/>
            <person name="Krogh S."/>
            <person name="Kumano M."/>
            <person name="Kurita K."/>
            <person name="Lapidus A."/>
            <person name="Lardinois S."/>
            <person name="Lauber J."/>
            <person name="Lazarevic V."/>
            <person name="Lee S.-M."/>
            <person name="Levine A."/>
            <person name="Liu H."/>
            <person name="Masuda S."/>
            <person name="Mauel C."/>
            <person name="Medigue C."/>
            <person name="Medina N."/>
            <person name="Mellado R.P."/>
            <person name="Mizuno M."/>
            <person name="Moestl D."/>
            <person name="Nakai S."/>
            <person name="Noback M."/>
            <person name="Noone D."/>
            <person name="O'Reilly M."/>
            <person name="Ogawa K."/>
            <person name="Ogiwara A."/>
            <person name="Oudega B."/>
            <person name="Park S.-H."/>
            <person name="Parro V."/>
            <person name="Pohl T.M."/>
            <person name="Portetelle D."/>
            <person name="Porwollik S."/>
            <person name="Prescott A.M."/>
            <person name="Presecan E."/>
            <person name="Pujic P."/>
            <person name="Purnelle B."/>
            <person name="Rapoport G."/>
            <person name="Rey M."/>
            <person name="Reynolds S."/>
            <person name="Rieger M."/>
            <person name="Rivolta C."/>
            <person name="Rocha E."/>
            <person name="Roche B."/>
            <person name="Rose M."/>
            <person name="Sadaie Y."/>
            <person name="Sato T."/>
            <person name="Scanlan E."/>
            <person name="Schleich S."/>
            <person name="Schroeter R."/>
            <person name="Scoffone F."/>
            <person name="Sekiguchi J."/>
            <person name="Sekowska A."/>
            <person name="Seror S.J."/>
            <person name="Serror P."/>
            <person name="Shin B.-S."/>
            <person name="Soldo B."/>
            <person name="Sorokin A."/>
            <person name="Tacconi E."/>
            <person name="Takagi T."/>
            <person name="Takahashi H."/>
            <person name="Takemaru K."/>
            <person name="Takeuchi M."/>
            <person name="Tamakoshi A."/>
            <person name="Tanaka T."/>
            <person name="Terpstra P."/>
            <person name="Tognoni A."/>
            <person name="Tosato V."/>
            <person name="Uchiyama S."/>
            <person name="Vandenbol M."/>
            <person name="Vannier F."/>
            <person name="Vassarotti A."/>
            <person name="Viari A."/>
            <person name="Wambutt R."/>
            <person name="Wedler E."/>
            <person name="Wedler H."/>
            <person name="Weitzenegger T."/>
            <person name="Winters P."/>
            <person name="Wipat A."/>
            <person name="Yamamoto H."/>
            <person name="Yamane K."/>
            <person name="Yasumoto K."/>
            <person name="Yata K."/>
            <person name="Yoshida K."/>
            <person name="Yoshikawa H.-F."/>
            <person name="Zumstein E."/>
            <person name="Yoshikawa H."/>
            <person name="Danchin A."/>
        </authorList>
    </citation>
    <scope>NUCLEOTIDE SEQUENCE [LARGE SCALE GENOMIC DNA]</scope>
    <source>
        <strain>168</strain>
    </source>
</reference>
<reference key="3">
    <citation type="journal article" date="1998" name="Mol. Microbiol.">
        <title>Characterization of polyamine synthesis pathway in Bacillus subtilis 168.</title>
        <authorList>
            <person name="Sekowska A."/>
            <person name="Bertin P."/>
            <person name="Danchin A."/>
        </authorList>
    </citation>
    <scope>CHARACTERIZATION OF POLYAMINE PATHWAY</scope>
</reference>
<sequence length="290" mass="32417">MRFDEAYSGKVFIASRPEWEEADAILYGMPMDWTVSYRPGSRFGPSRIREVSIGLEEYSPYLDRDLADLNFFDAGDIPLPFGNPQRSLDMIEEYVDSILEKGKFPMGMGGEHLVSWPVIKAMYKKYPDLAIIHFDAHTDLRVDYEGEPLSHSTPIRKAAELIGPHNVYSFGIRSGMKEEFEWAKENGMHISKFEVLEPLKEVLPKLAGRPVYVTIDIDVLDPAHAPGTGTVDAGGITSKELLASVHEIARSEVNVKGADLVEVAPVYDHSEQTANTASKIIREMLLGFVK</sequence>
<keyword id="KW-0378">Hydrolase</keyword>
<keyword id="KW-0464">Manganese</keyword>
<keyword id="KW-0479">Metal-binding</keyword>
<keyword id="KW-0620">Polyamine biosynthesis</keyword>
<keyword id="KW-0661">Putrescine biosynthesis</keyword>
<keyword id="KW-1185">Reference proteome</keyword>
<keyword id="KW-0745">Spermidine biosynthesis</keyword>